<evidence type="ECO:0000255" key="1">
    <source>
        <dbReference type="PROSITE-ProRule" id="PRU00140"/>
    </source>
</evidence>
<evidence type="ECO:0000255" key="2">
    <source>
        <dbReference type="PROSITE-ProRule" id="PRU00981"/>
    </source>
</evidence>
<evidence type="ECO:0000256" key="3">
    <source>
        <dbReference type="SAM" id="MobiDB-lite"/>
    </source>
</evidence>
<evidence type="ECO:0000269" key="4">
    <source>
    </source>
</evidence>
<evidence type="ECO:0000303" key="5">
    <source>
    </source>
</evidence>
<evidence type="ECO:0000305" key="6"/>
<evidence type="ECO:0000312" key="7">
    <source>
        <dbReference type="EMBL" id="BAE53417.1"/>
    </source>
</evidence>
<evidence type="ECO:0000312" key="8">
    <source>
        <dbReference type="Proteomes" id="UP000001940"/>
    </source>
</evidence>
<evidence type="ECO:0000312" key="9">
    <source>
        <dbReference type="WormBase" id="C15C8.2"/>
    </source>
</evidence>
<feature type="chain" id="PRO_0000456247" description="PAS domain-containing protein cky-1">
    <location>
        <begin position="1"/>
        <end position="676"/>
    </location>
</feature>
<feature type="domain" description="bHLH" evidence="2">
    <location>
        <begin position="76"/>
        <end position="129"/>
    </location>
</feature>
<feature type="domain" description="PAS" evidence="1">
    <location>
        <begin position="165"/>
        <end position="215"/>
    </location>
</feature>
<feature type="region of interest" description="Disordered" evidence="3">
    <location>
        <begin position="45"/>
        <end position="89"/>
    </location>
</feature>
<feature type="region of interest" description="Basic motif" evidence="2">
    <location>
        <begin position="76"/>
        <end position="89"/>
    </location>
</feature>
<feature type="region of interest" description="Helix-loop-helix motif" evidence="2">
    <location>
        <begin position="90"/>
        <end position="129"/>
    </location>
</feature>
<feature type="region of interest" description="Disordered" evidence="3">
    <location>
        <begin position="436"/>
        <end position="462"/>
    </location>
</feature>
<feature type="compositionally biased region" description="Low complexity" evidence="3">
    <location>
        <begin position="45"/>
        <end position="72"/>
    </location>
</feature>
<feature type="compositionally biased region" description="Polar residues" evidence="3">
    <location>
        <begin position="73"/>
        <end position="84"/>
    </location>
</feature>
<name>NPASH_CAEEL</name>
<protein>
    <recommendedName>
        <fullName evidence="6">PAS domain-containing protein cky-1</fullName>
    </recommendedName>
    <alternativeName>
        <fullName evidence="9">CKY homolog</fullName>
    </alternativeName>
    <alternativeName>
        <fullName evidence="5">bHLH-PAS transcription factor cky-1</fullName>
    </alternativeName>
</protein>
<sequence>MSTTVPLHASSFSSGTTGAGGGVQQALQLQHCAYHVGASVGSSGSALNNNSINVPNNNTMGMSSAGSSNGSNLVNGQQRSTRGASKQRRDQINVEIQKLRDLLPLSDLIKDRLFQLQVMSLGCIFIRKHRYQQTVLQPQLQMLQMQMSSPMPRGIDICKALRGFMLMVTRSGKILHVSDNASEYLGHSVEEIMCQGDSIYDLVDGRDHGAVQAELASGPPGAATFPEERVFICRLNLARTAKRQLQYHKFVLFQGRYIQPAEFYQQLNAQNSQPDCDQPVFSAYCQPLINPENAEGMSTGNTHVFSTQHYLDMKFKEADTMASQHLGFSKEQLKGMSWYGMIHPNHVPEIAHKHRLLCQEKEGSVLALIRLQAANGEWIWLHTVFSIRPNNELNSDGKRLRHVIHCFHQKLTDLEAATLQANSWIYSMRHTYPTVFSCQDSPPPSEEQQPSSPQTPPFTEQPPMLVEQKPLIGAGIAPGFPSLDYNQIKVEIPMRPINTQIPLFTPESSSPESSASLHTSLLPHHNAFPLDILEDILPSNDVLPELKDEVDEILRQVEQSPATSPAHSFPSNVNFGHRHSMPNAFDSAELYKYLGPALFDGNFAMQHQHHLQQQHQSQPNHPLQMTPIPPMSCPPSNYGQSNFLFHHQHLNQHLHHSQPPHPYHFDYYNRKRSWAV</sequence>
<keyword id="KW-0238">DNA-binding</keyword>
<keyword id="KW-0539">Nucleus</keyword>
<keyword id="KW-1185">Reference proteome</keyword>
<keyword id="KW-0804">Transcription</keyword>
<keyword id="KW-0805">Transcription regulation</keyword>
<proteinExistence type="evidence at protein level"/>
<reference evidence="7" key="1">
    <citation type="journal article" date="2007" name="Gene">
        <title>Characterization of Drosophila and Caenorhabditis elegans NXF-like-factors, putative homologs of mammalian NXF.</title>
        <authorList>
            <person name="Ooe N."/>
            <person name="Saito K."/>
            <person name="Oeda K."/>
            <person name="Nakatuka I."/>
            <person name="Kaneko H."/>
        </authorList>
    </citation>
    <scope>NUCLEOTIDE SEQUENCE [MRNA]</scope>
    <scope>FUNCTION</scope>
    <scope>SUBUNIT</scope>
    <scope>INTERACTION WITH AHA-1</scope>
    <scope>SUBCELLULAR LOCATION</scope>
</reference>
<reference evidence="8" key="2">
    <citation type="journal article" date="1998" name="Science">
        <title>Genome sequence of the nematode C. elegans: a platform for investigating biology.</title>
        <authorList>
            <consortium name="The C. elegans sequencing consortium"/>
        </authorList>
    </citation>
    <scope>NUCLEOTIDE SEQUENCE [LARGE SCALE GENOMIC DNA]</scope>
    <source>
        <strain evidence="8">Bristol N2</strain>
    </source>
</reference>
<comment type="function">
    <text evidence="4">Transcription factor (PubMed:17628356). Efficient DNA binding requires dimerization with another bHLH protein, such as ARNT homolog aha-1 (PubMed:17628356). Regulates transcription of target genes, probably acting in complex with aha-1 (PubMed:17628356).</text>
</comment>
<comment type="subunit">
    <text evidence="4">Heterodimer; efficient DNA binding requires dimerization with another bHLH protein (PubMed:17628356). Forms a heterodimer with ARNT homolog aha-1; binds DNA as heterodimer (PubMed:17628356).</text>
</comment>
<comment type="subcellular location">
    <subcellularLocation>
        <location evidence="2 5">Nucleus</location>
    </subcellularLocation>
</comment>
<organism evidence="8">
    <name type="scientific">Caenorhabditis elegans</name>
    <dbReference type="NCBI Taxonomy" id="6239"/>
    <lineage>
        <taxon>Eukaryota</taxon>
        <taxon>Metazoa</taxon>
        <taxon>Ecdysozoa</taxon>
        <taxon>Nematoda</taxon>
        <taxon>Chromadorea</taxon>
        <taxon>Rhabditida</taxon>
        <taxon>Rhabditina</taxon>
        <taxon>Rhabditomorpha</taxon>
        <taxon>Rhabditoidea</taxon>
        <taxon>Rhabditidae</taxon>
        <taxon>Peloderinae</taxon>
        <taxon>Caenorhabditis</taxon>
    </lineage>
</organism>
<gene>
    <name evidence="9" type="primary">cky-1</name>
    <name evidence="7" type="synonym">cNXFL</name>
    <name evidence="9" type="ORF">C15C8.2</name>
</gene>
<dbReference type="EMBL" id="AB096001">
    <property type="protein sequence ID" value="BAE53417.1"/>
    <property type="molecule type" value="mRNA"/>
</dbReference>
<dbReference type="EMBL" id="BX284605">
    <property type="protein sequence ID" value="CAP46770.1"/>
    <property type="molecule type" value="Genomic_DNA"/>
</dbReference>
<dbReference type="PIR" id="T19307">
    <property type="entry name" value="T19307"/>
</dbReference>
<dbReference type="RefSeq" id="NP_001122849.1">
    <property type="nucleotide sequence ID" value="NM_001129377.5"/>
</dbReference>
<dbReference type="SMR" id="G5EFL9"/>
<dbReference type="FunCoup" id="G5EFL9">
    <property type="interactions" value="123"/>
</dbReference>
<dbReference type="IntAct" id="G5EFL9">
    <property type="interactions" value="3"/>
</dbReference>
<dbReference type="STRING" id="6239.C15C8.2.1"/>
<dbReference type="PaxDb" id="6239-C15C8.2b"/>
<dbReference type="EnsemblMetazoa" id="C15C8.2.1">
    <property type="protein sequence ID" value="C15C8.2.1"/>
    <property type="gene ID" value="WBGene00000521"/>
</dbReference>
<dbReference type="GeneID" id="179743"/>
<dbReference type="KEGG" id="cel:CELE_C15C8.2"/>
<dbReference type="AGR" id="WB:WBGene00000521"/>
<dbReference type="CTD" id="179743"/>
<dbReference type="WormBase" id="C15C8.2">
    <property type="protein sequence ID" value="CE41867"/>
    <property type="gene ID" value="WBGene00000521"/>
    <property type="gene designation" value="cky-1"/>
</dbReference>
<dbReference type="eggNOG" id="ENOG502QRXX">
    <property type="taxonomic scope" value="Eukaryota"/>
</dbReference>
<dbReference type="GeneTree" id="ENSGT00530000064165"/>
<dbReference type="HOGENOM" id="CLU_430370_0_0_1"/>
<dbReference type="InParanoid" id="G5EFL9"/>
<dbReference type="OMA" id="MLMVTRS"/>
<dbReference type="OrthoDB" id="9978016at2759"/>
<dbReference type="Reactome" id="R-CEL-9768919">
    <property type="pathway name" value="NPAS4 regulates expression of target genes"/>
</dbReference>
<dbReference type="PRO" id="PR:G5EFL9"/>
<dbReference type="Proteomes" id="UP000001940">
    <property type="component" value="Chromosome V"/>
</dbReference>
<dbReference type="Bgee" id="WBGene00000521">
    <property type="expression patterns" value="Expressed in pharyngeal muscle cell (C elegans) and 2 other cell types or tissues"/>
</dbReference>
<dbReference type="GO" id="GO:0005634">
    <property type="term" value="C:nucleus"/>
    <property type="evidence" value="ECO:0000305"/>
    <property type="project" value="WormBase"/>
</dbReference>
<dbReference type="GO" id="GO:0090575">
    <property type="term" value="C:RNA polymerase II transcription regulator complex"/>
    <property type="evidence" value="ECO:0000314"/>
    <property type="project" value="WormBase"/>
</dbReference>
<dbReference type="GO" id="GO:0000981">
    <property type="term" value="F:DNA-binding transcription factor activity, RNA polymerase II-specific"/>
    <property type="evidence" value="ECO:0000318"/>
    <property type="project" value="GO_Central"/>
</dbReference>
<dbReference type="GO" id="GO:0046983">
    <property type="term" value="F:protein dimerization activity"/>
    <property type="evidence" value="ECO:0007669"/>
    <property type="project" value="InterPro"/>
</dbReference>
<dbReference type="GO" id="GO:0000977">
    <property type="term" value="F:RNA polymerase II transcription regulatory region sequence-specific DNA binding"/>
    <property type="evidence" value="ECO:0000318"/>
    <property type="project" value="GO_Central"/>
</dbReference>
<dbReference type="GO" id="GO:0045944">
    <property type="term" value="P:positive regulation of transcription by RNA polymerase II"/>
    <property type="evidence" value="ECO:0000314"/>
    <property type="project" value="WormBase"/>
</dbReference>
<dbReference type="GO" id="GO:0006357">
    <property type="term" value="P:regulation of transcription by RNA polymerase II"/>
    <property type="evidence" value="ECO:0000318"/>
    <property type="project" value="GO_Central"/>
</dbReference>
<dbReference type="CDD" id="cd19697">
    <property type="entry name" value="bHLH-PAS_NPAS4_PASD10"/>
    <property type="match status" value="1"/>
</dbReference>
<dbReference type="CDD" id="cd00130">
    <property type="entry name" value="PAS"/>
    <property type="match status" value="2"/>
</dbReference>
<dbReference type="FunFam" id="3.30.450.20:FF:000081">
    <property type="entry name" value="Dysfusion, isoform B"/>
    <property type="match status" value="1"/>
</dbReference>
<dbReference type="Gene3D" id="3.30.450.20">
    <property type="entry name" value="PAS domain"/>
    <property type="match status" value="2"/>
</dbReference>
<dbReference type="InterPro" id="IPR011598">
    <property type="entry name" value="bHLH_dom"/>
</dbReference>
<dbReference type="InterPro" id="IPR056192">
    <property type="entry name" value="bHLH_NPAS4"/>
</dbReference>
<dbReference type="InterPro" id="IPR036638">
    <property type="entry name" value="HLH_DNA-bd_sf"/>
</dbReference>
<dbReference type="InterPro" id="IPR000014">
    <property type="entry name" value="PAS"/>
</dbReference>
<dbReference type="InterPro" id="IPR035965">
    <property type="entry name" value="PAS-like_dom_sf"/>
</dbReference>
<dbReference type="PANTHER" id="PTHR23043:SF39">
    <property type="entry name" value="DYSFUSION, ISOFORM D"/>
    <property type="match status" value="1"/>
</dbReference>
<dbReference type="PANTHER" id="PTHR23043">
    <property type="entry name" value="HYPOXIA-INDUCIBLE FACTOR 1 ALPHA"/>
    <property type="match status" value="1"/>
</dbReference>
<dbReference type="Pfam" id="PF23183">
    <property type="entry name" value="bHLH_NPAS4"/>
    <property type="match status" value="1"/>
</dbReference>
<dbReference type="Pfam" id="PF14598">
    <property type="entry name" value="PAS_11"/>
    <property type="match status" value="1"/>
</dbReference>
<dbReference type="SMART" id="SM00091">
    <property type="entry name" value="PAS"/>
    <property type="match status" value="2"/>
</dbReference>
<dbReference type="SUPFAM" id="SSF47459">
    <property type="entry name" value="HLH, helix-loop-helix DNA-binding domain"/>
    <property type="match status" value="1"/>
</dbReference>
<dbReference type="SUPFAM" id="SSF55785">
    <property type="entry name" value="PYP-like sensor domain (PAS domain)"/>
    <property type="match status" value="2"/>
</dbReference>
<dbReference type="PROSITE" id="PS50888">
    <property type="entry name" value="BHLH"/>
    <property type="match status" value="1"/>
</dbReference>
<dbReference type="PROSITE" id="PS50112">
    <property type="entry name" value="PAS"/>
    <property type="match status" value="1"/>
</dbReference>
<accession>G5EFL9</accession>